<evidence type="ECO:0000255" key="1">
    <source>
        <dbReference type="HAMAP-Rule" id="MF_00133"/>
    </source>
</evidence>
<proteinExistence type="inferred from homology"/>
<feature type="chain" id="PRO_1000095792" description="Tryptophan synthase beta chain">
    <location>
        <begin position="1"/>
        <end position="430"/>
    </location>
</feature>
<feature type="modified residue" description="N6-(pyridoxal phosphate)lysine" evidence="1">
    <location>
        <position position="95"/>
    </location>
</feature>
<sequence>MSTNTDDTTRTDGTFGDYGGQYVPEVLMPAVEELTDAYERYVLDNEDGFVDDFRQRIRSFGGRPTPLTHAPTLSQRHGVDVYLKREDLLHGGAHKLNNALGQVLLAKYMGKDRIVAETGAGQHGTATAMACAALEMPCEIYMGRTDVNRQRPNVFRMRLHDADVNPVTVGSGTLKEAINETMRDWATNVADTHYVIGSVVGPHPFPSMVRDFQAIISEELRAQSREQLGELPAAVIACAGGGSNTMGAFGAFVGSASLPGAPAGTHEPAPDVDLLAVEAGGSRLGVDDDAGYAPNSASLSTGTEGVLHGARTKLLQTETGQIVESHSVSAGLDYAGVGPELAHLVDTGRITPTNVDDDAALAAFHRLSRDEGVIPALETSHAVAALDQYDGDGPVVVNVSGRGDKDLDTVIEASAANDIDAAPDMEVFEQ</sequence>
<name>TRPB_HALS3</name>
<protein>
    <recommendedName>
        <fullName evidence="1">Tryptophan synthase beta chain</fullName>
        <ecNumber evidence="1">4.2.1.20</ecNumber>
    </recommendedName>
</protein>
<gene>
    <name evidence="1" type="primary">trpB</name>
    <name type="ordered locus">OE_1470F</name>
</gene>
<keyword id="KW-0028">Amino-acid biosynthesis</keyword>
<keyword id="KW-0057">Aromatic amino acid biosynthesis</keyword>
<keyword id="KW-0456">Lyase</keyword>
<keyword id="KW-0663">Pyridoxal phosphate</keyword>
<keyword id="KW-0822">Tryptophan biosynthesis</keyword>
<comment type="function">
    <text evidence="1">The beta subunit is responsible for the synthesis of L-tryptophan from indole and L-serine.</text>
</comment>
<comment type="catalytic activity">
    <reaction evidence="1">
        <text>(1S,2R)-1-C-(indol-3-yl)glycerol 3-phosphate + L-serine = D-glyceraldehyde 3-phosphate + L-tryptophan + H2O</text>
        <dbReference type="Rhea" id="RHEA:10532"/>
        <dbReference type="ChEBI" id="CHEBI:15377"/>
        <dbReference type="ChEBI" id="CHEBI:33384"/>
        <dbReference type="ChEBI" id="CHEBI:57912"/>
        <dbReference type="ChEBI" id="CHEBI:58866"/>
        <dbReference type="ChEBI" id="CHEBI:59776"/>
        <dbReference type="EC" id="4.2.1.20"/>
    </reaction>
</comment>
<comment type="cofactor">
    <cofactor evidence="1">
        <name>pyridoxal 5'-phosphate</name>
        <dbReference type="ChEBI" id="CHEBI:597326"/>
    </cofactor>
</comment>
<comment type="pathway">
    <text evidence="1">Amino-acid biosynthesis; L-tryptophan biosynthesis; L-tryptophan from chorismate: step 5/5.</text>
</comment>
<comment type="subunit">
    <text evidence="1">Tetramer of two alpha and two beta chains.</text>
</comment>
<comment type="similarity">
    <text evidence="1">Belongs to the TrpB family.</text>
</comment>
<organism>
    <name type="scientific">Halobacterium salinarum (strain ATCC 29341 / DSM 671 / R1)</name>
    <dbReference type="NCBI Taxonomy" id="478009"/>
    <lineage>
        <taxon>Archaea</taxon>
        <taxon>Methanobacteriati</taxon>
        <taxon>Methanobacteriota</taxon>
        <taxon>Stenosarchaea group</taxon>
        <taxon>Halobacteria</taxon>
        <taxon>Halobacteriales</taxon>
        <taxon>Halobacteriaceae</taxon>
        <taxon>Halobacterium</taxon>
        <taxon>Halobacterium salinarum NRC-34001</taxon>
    </lineage>
</organism>
<accession>B0R332</accession>
<dbReference type="EC" id="4.2.1.20" evidence="1"/>
<dbReference type="EMBL" id="AM774415">
    <property type="protein sequence ID" value="CAP13142.1"/>
    <property type="molecule type" value="Genomic_DNA"/>
</dbReference>
<dbReference type="RefSeq" id="WP_010902181.1">
    <property type="nucleotide sequence ID" value="NC_010364.1"/>
</dbReference>
<dbReference type="SMR" id="B0R332"/>
<dbReference type="EnsemblBacteria" id="CAP13142">
    <property type="protein sequence ID" value="CAP13142"/>
    <property type="gene ID" value="OE_1470F"/>
</dbReference>
<dbReference type="GeneID" id="68693254"/>
<dbReference type="KEGG" id="hsl:OE_1470F"/>
<dbReference type="HOGENOM" id="CLU_016734_3_1_2"/>
<dbReference type="PhylomeDB" id="B0R332"/>
<dbReference type="UniPathway" id="UPA00035">
    <property type="reaction ID" value="UER00044"/>
</dbReference>
<dbReference type="Proteomes" id="UP000001321">
    <property type="component" value="Chromosome"/>
</dbReference>
<dbReference type="GO" id="GO:0005737">
    <property type="term" value="C:cytoplasm"/>
    <property type="evidence" value="ECO:0007669"/>
    <property type="project" value="TreeGrafter"/>
</dbReference>
<dbReference type="GO" id="GO:0004834">
    <property type="term" value="F:tryptophan synthase activity"/>
    <property type="evidence" value="ECO:0007669"/>
    <property type="project" value="UniProtKB-UniRule"/>
</dbReference>
<dbReference type="CDD" id="cd06446">
    <property type="entry name" value="Trp-synth_B"/>
    <property type="match status" value="1"/>
</dbReference>
<dbReference type="FunFam" id="3.40.50.1100:FF:000001">
    <property type="entry name" value="Tryptophan synthase beta chain"/>
    <property type="match status" value="1"/>
</dbReference>
<dbReference type="FunFam" id="3.40.50.1100:FF:000004">
    <property type="entry name" value="Tryptophan synthase beta chain"/>
    <property type="match status" value="1"/>
</dbReference>
<dbReference type="Gene3D" id="3.40.50.1100">
    <property type="match status" value="2"/>
</dbReference>
<dbReference type="HAMAP" id="MF_00133">
    <property type="entry name" value="Trp_synth_beta"/>
    <property type="match status" value="1"/>
</dbReference>
<dbReference type="InterPro" id="IPR006653">
    <property type="entry name" value="Trp_synth_b_CS"/>
</dbReference>
<dbReference type="InterPro" id="IPR006654">
    <property type="entry name" value="Trp_synth_beta"/>
</dbReference>
<dbReference type="InterPro" id="IPR023026">
    <property type="entry name" value="Trp_synth_beta/beta-like"/>
</dbReference>
<dbReference type="InterPro" id="IPR001926">
    <property type="entry name" value="TrpB-like_PALP"/>
</dbReference>
<dbReference type="InterPro" id="IPR036052">
    <property type="entry name" value="TrpB-like_PALP_sf"/>
</dbReference>
<dbReference type="NCBIfam" id="TIGR00263">
    <property type="entry name" value="trpB"/>
    <property type="match status" value="1"/>
</dbReference>
<dbReference type="PANTHER" id="PTHR48077:SF3">
    <property type="entry name" value="TRYPTOPHAN SYNTHASE"/>
    <property type="match status" value="1"/>
</dbReference>
<dbReference type="PANTHER" id="PTHR48077">
    <property type="entry name" value="TRYPTOPHAN SYNTHASE-RELATED"/>
    <property type="match status" value="1"/>
</dbReference>
<dbReference type="Pfam" id="PF00291">
    <property type="entry name" value="PALP"/>
    <property type="match status" value="1"/>
</dbReference>
<dbReference type="PIRSF" id="PIRSF001413">
    <property type="entry name" value="Trp_syn_beta"/>
    <property type="match status" value="1"/>
</dbReference>
<dbReference type="SUPFAM" id="SSF53686">
    <property type="entry name" value="Tryptophan synthase beta subunit-like PLP-dependent enzymes"/>
    <property type="match status" value="1"/>
</dbReference>
<dbReference type="PROSITE" id="PS00168">
    <property type="entry name" value="TRP_SYNTHASE_BETA"/>
    <property type="match status" value="1"/>
</dbReference>
<reference key="1">
    <citation type="journal article" date="2008" name="Genomics">
        <title>Evolution in the laboratory: the genome of Halobacterium salinarum strain R1 compared to that of strain NRC-1.</title>
        <authorList>
            <person name="Pfeiffer F."/>
            <person name="Schuster S.C."/>
            <person name="Broicher A."/>
            <person name="Falb M."/>
            <person name="Palm P."/>
            <person name="Rodewald K."/>
            <person name="Ruepp A."/>
            <person name="Soppa J."/>
            <person name="Tittor J."/>
            <person name="Oesterhelt D."/>
        </authorList>
    </citation>
    <scope>NUCLEOTIDE SEQUENCE [LARGE SCALE GENOMIC DNA]</scope>
    <source>
        <strain>ATCC 29341 / DSM 671 / R1</strain>
    </source>
</reference>